<organism>
    <name type="scientific">Gekko gecko</name>
    <name type="common">Tokay gecko</name>
    <dbReference type="NCBI Taxonomy" id="36310"/>
    <lineage>
        <taxon>Eukaryota</taxon>
        <taxon>Metazoa</taxon>
        <taxon>Chordata</taxon>
        <taxon>Craniata</taxon>
        <taxon>Vertebrata</taxon>
        <taxon>Euteleostomi</taxon>
        <taxon>Lepidosauria</taxon>
        <taxon>Squamata</taxon>
        <taxon>Bifurcata</taxon>
        <taxon>Gekkota</taxon>
        <taxon>Gekkonidae</taxon>
        <taxon>Gekkoninae</taxon>
        <taxon>Gekko</taxon>
    </lineage>
</organism>
<dbReference type="EMBL" id="M92036">
    <property type="protein sequence ID" value="AAA49308.1"/>
    <property type="molecule type" value="mRNA"/>
</dbReference>
<dbReference type="PIR" id="B46191">
    <property type="entry name" value="B46191"/>
</dbReference>
<dbReference type="SMR" id="P35358"/>
<dbReference type="GO" id="GO:0016020">
    <property type="term" value="C:membrane"/>
    <property type="evidence" value="ECO:0007669"/>
    <property type="project" value="UniProtKB-SubCell"/>
</dbReference>
<dbReference type="GO" id="GO:0004930">
    <property type="term" value="F:G protein-coupled receptor activity"/>
    <property type="evidence" value="ECO:0007669"/>
    <property type="project" value="UniProtKB-KW"/>
</dbReference>
<dbReference type="GO" id="GO:0009881">
    <property type="term" value="F:photoreceptor activity"/>
    <property type="evidence" value="ECO:0007669"/>
    <property type="project" value="UniProtKB-KW"/>
</dbReference>
<dbReference type="GO" id="GO:0007602">
    <property type="term" value="P:phototransduction"/>
    <property type="evidence" value="ECO:0007669"/>
    <property type="project" value="UniProtKB-KW"/>
</dbReference>
<dbReference type="GO" id="GO:0007601">
    <property type="term" value="P:visual perception"/>
    <property type="evidence" value="ECO:0007669"/>
    <property type="project" value="UniProtKB-KW"/>
</dbReference>
<dbReference type="FunFam" id="1.20.1070.10:FF:000090">
    <property type="entry name" value="Long-wave-sensitive opsin 1"/>
    <property type="match status" value="1"/>
</dbReference>
<dbReference type="Gene3D" id="1.20.1070.10">
    <property type="entry name" value="Rhodopsin 7-helix transmembrane proteins"/>
    <property type="match status" value="1"/>
</dbReference>
<dbReference type="InterPro" id="IPR050125">
    <property type="entry name" value="GPCR_opsins"/>
</dbReference>
<dbReference type="InterPro" id="IPR000276">
    <property type="entry name" value="GPCR_Rhodpsn"/>
</dbReference>
<dbReference type="InterPro" id="IPR017452">
    <property type="entry name" value="GPCR_Rhodpsn_7TM"/>
</dbReference>
<dbReference type="InterPro" id="IPR001760">
    <property type="entry name" value="Opsin"/>
</dbReference>
<dbReference type="InterPro" id="IPR000378">
    <property type="entry name" value="Opsin_red/grn"/>
</dbReference>
<dbReference type="InterPro" id="IPR027430">
    <property type="entry name" value="Retinal_BS"/>
</dbReference>
<dbReference type="PANTHER" id="PTHR24240">
    <property type="entry name" value="OPSIN"/>
    <property type="match status" value="1"/>
</dbReference>
<dbReference type="Pfam" id="PF00001">
    <property type="entry name" value="7tm_1"/>
    <property type="match status" value="1"/>
</dbReference>
<dbReference type="PRINTS" id="PR00237">
    <property type="entry name" value="GPCRRHODOPSN"/>
</dbReference>
<dbReference type="PRINTS" id="PR00238">
    <property type="entry name" value="OPSIN"/>
</dbReference>
<dbReference type="PRINTS" id="PR00575">
    <property type="entry name" value="OPSINREDGRN"/>
</dbReference>
<dbReference type="SUPFAM" id="SSF81321">
    <property type="entry name" value="Family A G protein-coupled receptor-like"/>
    <property type="match status" value="1"/>
</dbReference>
<dbReference type="PROSITE" id="PS00237">
    <property type="entry name" value="G_PROTEIN_RECEP_F1_1"/>
    <property type="match status" value="1"/>
</dbReference>
<dbReference type="PROSITE" id="PS50262">
    <property type="entry name" value="G_PROTEIN_RECEP_F1_2"/>
    <property type="match status" value="1"/>
</dbReference>
<dbReference type="PROSITE" id="PS00238">
    <property type="entry name" value="OPSIN"/>
    <property type="match status" value="1"/>
</dbReference>
<sequence length="365" mass="40737">MTEAWNVAVFAARRSRDDDDTTRGSVFTYTNTNNTRGPFEGPNYHIAPRWVYNLVSFFMIIVVIASCFTNGLVLVATAKFKKLRHPLNWILVNLAFVDLVETLVASTISVFNQIFGYFILGHPLCVIEGYVVSSCGITGLWSLAIISWERWFVVCKPFGNIKFDSKLAIIGIVFSWVWAWGWSAPPIFGWSRYWPHGLKTSCGPDVFSGSVELGCQSFMLTLMITCCFLPLFIIIVCYLQVWMAIRAVAAQQKESESTQKAEREVSRMVVVMIVAFCICWGPYASFVSFAAANPGYAFHPLAAALPAYFAKSATIYNPVIYVFMNRQFRNCIMQLFGKKVDDGSEASTTSRTEVSSVSNSSVAPA</sequence>
<feature type="chain" id="PRO_0000197783" description="Green-sensitive opsin P521">
    <location>
        <begin position="1"/>
        <end position="365"/>
    </location>
</feature>
<feature type="topological domain" description="Extracellular">
    <location>
        <begin position="1"/>
        <end position="51"/>
    </location>
</feature>
<feature type="transmembrane region" description="Helical; Name=1" evidence="2">
    <location>
        <begin position="52"/>
        <end position="76"/>
    </location>
</feature>
<feature type="topological domain" description="Cytoplasmic">
    <location>
        <begin position="77"/>
        <end position="88"/>
    </location>
</feature>
<feature type="transmembrane region" description="Helical; Name=2" evidence="2">
    <location>
        <begin position="89"/>
        <end position="113"/>
    </location>
</feature>
<feature type="topological domain" description="Extracellular">
    <location>
        <begin position="114"/>
        <end position="128"/>
    </location>
</feature>
<feature type="transmembrane region" description="Helical; Name=3" evidence="2">
    <location>
        <begin position="129"/>
        <end position="148"/>
    </location>
</feature>
<feature type="topological domain" description="Cytoplasmic">
    <location>
        <begin position="149"/>
        <end position="167"/>
    </location>
</feature>
<feature type="transmembrane region" description="Helical; Name=4" evidence="2">
    <location>
        <begin position="168"/>
        <end position="191"/>
    </location>
</feature>
<feature type="topological domain" description="Extracellular">
    <location>
        <begin position="192"/>
        <end position="217"/>
    </location>
</feature>
<feature type="transmembrane region" description="Helical; Name=5" evidence="2">
    <location>
        <begin position="218"/>
        <end position="245"/>
    </location>
</feature>
<feature type="topological domain" description="Cytoplasmic">
    <location>
        <begin position="246"/>
        <end position="267"/>
    </location>
</feature>
<feature type="transmembrane region" description="Helical; Name=6" evidence="2">
    <location>
        <begin position="268"/>
        <end position="291"/>
    </location>
</feature>
<feature type="topological domain" description="Extracellular">
    <location>
        <begin position="292"/>
        <end position="299"/>
    </location>
</feature>
<feature type="transmembrane region" description="Helical; Name=7" evidence="2">
    <location>
        <begin position="300"/>
        <end position="324"/>
    </location>
</feature>
<feature type="topological domain" description="Cytoplasmic">
    <location>
        <begin position="325"/>
        <end position="365"/>
    </location>
</feature>
<feature type="region of interest" description="Disordered" evidence="4">
    <location>
        <begin position="342"/>
        <end position="365"/>
    </location>
</feature>
<feature type="compositionally biased region" description="Low complexity" evidence="4">
    <location>
        <begin position="345"/>
        <end position="365"/>
    </location>
</feature>
<feature type="modified residue" description="N6-(retinylidene)lysine" evidence="1">
    <location>
        <position position="311"/>
    </location>
</feature>
<feature type="glycosylation site" description="N-linked (GlcNAc...) asparagine" evidence="2">
    <location>
        <position position="33"/>
    </location>
</feature>
<feature type="disulfide bond" evidence="3">
    <location>
        <begin position="125"/>
        <end position="202"/>
    </location>
</feature>
<comment type="function">
    <text>Visual pigments are the light-absorbing molecules that mediate vision. They consist of an apoprotein, opsin, covalently linked to cis-retinal.</text>
</comment>
<comment type="biophysicochemical properties">
    <absorption>
        <max>521 nm</max>
    </absorption>
</comment>
<comment type="subcellular location">
    <subcellularLocation>
        <location>Membrane</location>
        <topology>Multi-pass membrane protein</topology>
    </subcellularLocation>
</comment>
<comment type="tissue specificity">
    <text>In this lizard the color pigments are found in the rod-shaped photoreceptor cells which have been derived from ancestral cone-like photoreceptors.</text>
</comment>
<comment type="PTM">
    <text evidence="1">Phosphorylated on some or all of the serine and threonine residues present in the C-terminal region.</text>
</comment>
<comment type="similarity">
    <text evidence="3">Belongs to the G-protein coupled receptor 1 family. Opsin subfamily.</text>
</comment>
<reference key="1">
    <citation type="journal article" date="1992" name="Proc. Natl. Acad. Sci. U.S.A.">
        <title>Cone visual pigments are present in gecko rod cells.</title>
        <authorList>
            <person name="Kojima D."/>
            <person name="Okano T."/>
            <person name="Fukada Y."/>
            <person name="Shichida Y."/>
            <person name="Yoshizawa T."/>
            <person name="Ebrey T.G."/>
        </authorList>
    </citation>
    <scope>NUCLEOTIDE SEQUENCE [MRNA]</scope>
</reference>
<protein>
    <recommendedName>
        <fullName>Green-sensitive opsin P521</fullName>
    </recommendedName>
    <alternativeName>
        <fullName>Green photoreceptor pigment</fullName>
    </alternativeName>
</protein>
<keyword id="KW-0157">Chromophore</keyword>
<keyword id="KW-1015">Disulfide bond</keyword>
<keyword id="KW-0297">G-protein coupled receptor</keyword>
<keyword id="KW-0325">Glycoprotein</keyword>
<keyword id="KW-0472">Membrane</keyword>
<keyword id="KW-0597">Phosphoprotein</keyword>
<keyword id="KW-0600">Photoreceptor protein</keyword>
<keyword id="KW-0675">Receptor</keyword>
<keyword id="KW-0681">Retinal protein</keyword>
<keyword id="KW-0716">Sensory transduction</keyword>
<keyword id="KW-0807">Transducer</keyword>
<keyword id="KW-0812">Transmembrane</keyword>
<keyword id="KW-1133">Transmembrane helix</keyword>
<keyword id="KW-0844">Vision</keyword>
<evidence type="ECO:0000250" key="1"/>
<evidence type="ECO:0000255" key="2"/>
<evidence type="ECO:0000255" key="3">
    <source>
        <dbReference type="PROSITE-ProRule" id="PRU00521"/>
    </source>
</evidence>
<evidence type="ECO:0000256" key="4">
    <source>
        <dbReference type="SAM" id="MobiDB-lite"/>
    </source>
</evidence>
<name>OPSG_GEKGE</name>
<proteinExistence type="evidence at protein level"/>
<accession>P35358</accession>